<feature type="chain" id="PRO_0000315960" description="LIM domain-containing protein C4F6.12">
    <location>
        <begin position="1"/>
        <end position="438"/>
    </location>
</feature>
<feature type="domain" description="LIM zinc-binding 1" evidence="1">
    <location>
        <begin position="256"/>
        <end position="316"/>
    </location>
</feature>
<feature type="domain" description="LIM zinc-binding 2" evidence="1">
    <location>
        <begin position="318"/>
        <end position="375"/>
    </location>
</feature>
<feature type="domain" description="LIM zinc-binding 3" evidence="1">
    <location>
        <begin position="376"/>
        <end position="435"/>
    </location>
</feature>
<feature type="region of interest" description="Disordered" evidence="2">
    <location>
        <begin position="1"/>
        <end position="37"/>
    </location>
</feature>
<feature type="region of interest" description="Disordered" evidence="2">
    <location>
        <begin position="49"/>
        <end position="78"/>
    </location>
</feature>
<feature type="compositionally biased region" description="Polar residues" evidence="2">
    <location>
        <begin position="24"/>
        <end position="37"/>
    </location>
</feature>
<feature type="modified residue" description="Phosphoserine" evidence="3">
    <location>
        <position position="67"/>
    </location>
</feature>
<feature type="modified residue" description="Phosphoserine" evidence="3">
    <location>
        <position position="96"/>
    </location>
</feature>
<name>YOCC_SCHPO</name>
<protein>
    <recommendedName>
        <fullName>LIM domain-containing protein C4F6.12</fullName>
    </recommendedName>
</protein>
<gene>
    <name type="ORF">SPBC4F6.12</name>
</gene>
<organism>
    <name type="scientific">Schizosaccharomyces pombe (strain 972 / ATCC 24843)</name>
    <name type="common">Fission yeast</name>
    <dbReference type="NCBI Taxonomy" id="284812"/>
    <lineage>
        <taxon>Eukaryota</taxon>
        <taxon>Fungi</taxon>
        <taxon>Dikarya</taxon>
        <taxon>Ascomycota</taxon>
        <taxon>Taphrinomycotina</taxon>
        <taxon>Schizosaccharomycetes</taxon>
        <taxon>Schizosaccharomycetales</taxon>
        <taxon>Schizosaccharomycetaceae</taxon>
        <taxon>Schizosaccharomyces</taxon>
    </lineage>
</organism>
<dbReference type="EMBL" id="CU329671">
    <property type="protein sequence ID" value="CAA20732.1"/>
    <property type="molecule type" value="Genomic_DNA"/>
</dbReference>
<dbReference type="PIR" id="T40509">
    <property type="entry name" value="T40509"/>
</dbReference>
<dbReference type="SMR" id="O74398"/>
<dbReference type="BioGRID" id="277373">
    <property type="interactions" value="30"/>
</dbReference>
<dbReference type="STRING" id="284812.O74398"/>
<dbReference type="iPTMnet" id="O74398"/>
<dbReference type="PaxDb" id="4896-SPBC4F6.12.1"/>
<dbReference type="EnsemblFungi" id="SPBC4F6.12.1">
    <property type="protein sequence ID" value="SPBC4F6.12.1:pep"/>
    <property type="gene ID" value="SPBC4F6.12"/>
</dbReference>
<dbReference type="KEGG" id="spo:2540856"/>
<dbReference type="PomBase" id="SPBC4F6.12"/>
<dbReference type="VEuPathDB" id="FungiDB:SPBC4F6.12"/>
<dbReference type="eggNOG" id="KOG1703">
    <property type="taxonomic scope" value="Eukaryota"/>
</dbReference>
<dbReference type="HOGENOM" id="CLU_642755_0_0_1"/>
<dbReference type="InParanoid" id="O74398"/>
<dbReference type="PRO" id="PR:O74398"/>
<dbReference type="Proteomes" id="UP000002485">
    <property type="component" value="Chromosome II"/>
</dbReference>
<dbReference type="GO" id="GO:0032153">
    <property type="term" value="C:cell division site"/>
    <property type="evidence" value="ECO:0000314"/>
    <property type="project" value="PomBase"/>
</dbReference>
<dbReference type="GO" id="GO:0031097">
    <property type="term" value="C:medial cortex"/>
    <property type="evidence" value="ECO:0000314"/>
    <property type="project" value="PomBase"/>
</dbReference>
<dbReference type="GO" id="GO:0110085">
    <property type="term" value="C:mitotic actomyosin contractile ring"/>
    <property type="evidence" value="ECO:0000314"/>
    <property type="project" value="PomBase"/>
</dbReference>
<dbReference type="GO" id="GO:0120105">
    <property type="term" value="C:mitotic actomyosin contractile ring, intermediate layer"/>
    <property type="evidence" value="ECO:0000314"/>
    <property type="project" value="PomBase"/>
</dbReference>
<dbReference type="GO" id="GO:0005634">
    <property type="term" value="C:nucleus"/>
    <property type="evidence" value="ECO:0000318"/>
    <property type="project" value="GO_Central"/>
</dbReference>
<dbReference type="GO" id="GO:1990808">
    <property type="term" value="F:F-bar domain binding"/>
    <property type="evidence" value="ECO:0000353"/>
    <property type="project" value="PomBase"/>
</dbReference>
<dbReference type="GO" id="GO:0046872">
    <property type="term" value="F:metal ion binding"/>
    <property type="evidence" value="ECO:0007669"/>
    <property type="project" value="UniProtKB-KW"/>
</dbReference>
<dbReference type="GO" id="GO:0005094">
    <property type="term" value="F:Rho GDP-dissociation inhibitor activity"/>
    <property type="evidence" value="ECO:0000269"/>
    <property type="project" value="PomBase"/>
</dbReference>
<dbReference type="GO" id="GO:0003712">
    <property type="term" value="F:transcription coregulator activity"/>
    <property type="evidence" value="ECO:0000318"/>
    <property type="project" value="GO_Central"/>
</dbReference>
<dbReference type="GO" id="GO:0000915">
    <property type="term" value="P:actomyosin contractile ring assembly"/>
    <property type="evidence" value="ECO:0000316"/>
    <property type="project" value="PomBase"/>
</dbReference>
<dbReference type="GO" id="GO:0044837">
    <property type="term" value="P:actomyosin contractile ring organization"/>
    <property type="evidence" value="ECO:0000315"/>
    <property type="project" value="PomBase"/>
</dbReference>
<dbReference type="GO" id="GO:1904498">
    <property type="term" value="P:protein localization to mitotic actomyosin contractile ring"/>
    <property type="evidence" value="ECO:0000315"/>
    <property type="project" value="PomBase"/>
</dbReference>
<dbReference type="CDD" id="cd08368">
    <property type="entry name" value="LIM"/>
    <property type="match status" value="3"/>
</dbReference>
<dbReference type="FunFam" id="2.10.110.10:FF:000190">
    <property type="entry name" value="LIM domain protein"/>
    <property type="match status" value="1"/>
</dbReference>
<dbReference type="Gene3D" id="2.10.110.10">
    <property type="entry name" value="Cysteine Rich Protein"/>
    <property type="match status" value="3"/>
</dbReference>
<dbReference type="InterPro" id="IPR001781">
    <property type="entry name" value="Znf_LIM"/>
</dbReference>
<dbReference type="PANTHER" id="PTHR24205">
    <property type="entry name" value="FOUR AND A HALF LIM DOMAINS PROTEIN"/>
    <property type="match status" value="1"/>
</dbReference>
<dbReference type="PANTHER" id="PTHR24205:SF16">
    <property type="entry name" value="GH01042P-RELATED"/>
    <property type="match status" value="1"/>
</dbReference>
<dbReference type="Pfam" id="PF00412">
    <property type="entry name" value="LIM"/>
    <property type="match status" value="3"/>
</dbReference>
<dbReference type="SMART" id="SM00132">
    <property type="entry name" value="LIM"/>
    <property type="match status" value="3"/>
</dbReference>
<dbReference type="SUPFAM" id="SSF57716">
    <property type="entry name" value="Glucocorticoid receptor-like (DNA-binding domain)"/>
    <property type="match status" value="2"/>
</dbReference>
<dbReference type="PROSITE" id="PS00478">
    <property type="entry name" value="LIM_DOMAIN_1"/>
    <property type="match status" value="2"/>
</dbReference>
<dbReference type="PROSITE" id="PS50023">
    <property type="entry name" value="LIM_DOMAIN_2"/>
    <property type="match status" value="2"/>
</dbReference>
<evidence type="ECO:0000255" key="1">
    <source>
        <dbReference type="PROSITE-ProRule" id="PRU00125"/>
    </source>
</evidence>
<evidence type="ECO:0000256" key="2">
    <source>
        <dbReference type="SAM" id="MobiDB-lite"/>
    </source>
</evidence>
<evidence type="ECO:0000269" key="3">
    <source>
    </source>
</evidence>
<sequence length="438" mass="49030">MHSPIPELPRFERRLTGPRAAPSSPVSTNGSPLNNLVRSRLSDGALNFTGGRIATPLPQPSLKTPESPLSKRNPTIKQNRVRFDLPDDELSRSNVSSPEKTLLTSASTSTFDSLKKELLPELPSLAYSDDDEFPSSPEELNSHVNYPDVRNVYDCHTGLQPLVDHDCIEDRQKTFASKQLPTLPLQKSSKLSNRRPALHSFHSAPANSLYPLPTPTSQLPSNLSSNNLFQSDSLKPSMVSSHTSTKPVLYRGNSEKSCHSCGGSLRAGRIISASGKKLHPQCFKCDTCSQNLEHVGFYYREGKFYCHLDYHEQFSPRCKHCKTPIEDQAVHINNDWFHENHHFCAGCSEVFNVNIPCIYRDDLYWCQTCYDNKYAVKCKKCRKPILGISVKGSDGEYHSQCWTCGACNALLGDEGYFMIENTPICRPCKAISVKFNLD</sequence>
<accession>O74398</accession>
<proteinExistence type="evidence at protein level"/>
<keyword id="KW-0440">LIM domain</keyword>
<keyword id="KW-0479">Metal-binding</keyword>
<keyword id="KW-0597">Phosphoprotein</keyword>
<keyword id="KW-1185">Reference proteome</keyword>
<keyword id="KW-0677">Repeat</keyword>
<keyword id="KW-0862">Zinc</keyword>
<reference key="1">
    <citation type="journal article" date="2002" name="Nature">
        <title>The genome sequence of Schizosaccharomyces pombe.</title>
        <authorList>
            <person name="Wood V."/>
            <person name="Gwilliam R."/>
            <person name="Rajandream M.A."/>
            <person name="Lyne M.H."/>
            <person name="Lyne R."/>
            <person name="Stewart A."/>
            <person name="Sgouros J.G."/>
            <person name="Peat N."/>
            <person name="Hayles J."/>
            <person name="Baker S.G."/>
            <person name="Basham D."/>
            <person name="Bowman S."/>
            <person name="Brooks K."/>
            <person name="Brown D."/>
            <person name="Brown S."/>
            <person name="Chillingworth T."/>
            <person name="Churcher C.M."/>
            <person name="Collins M."/>
            <person name="Connor R."/>
            <person name="Cronin A."/>
            <person name="Davis P."/>
            <person name="Feltwell T."/>
            <person name="Fraser A."/>
            <person name="Gentles S."/>
            <person name="Goble A."/>
            <person name="Hamlin N."/>
            <person name="Harris D.E."/>
            <person name="Hidalgo J."/>
            <person name="Hodgson G."/>
            <person name="Holroyd S."/>
            <person name="Hornsby T."/>
            <person name="Howarth S."/>
            <person name="Huckle E.J."/>
            <person name="Hunt S."/>
            <person name="Jagels K."/>
            <person name="James K.D."/>
            <person name="Jones L."/>
            <person name="Jones M."/>
            <person name="Leather S."/>
            <person name="McDonald S."/>
            <person name="McLean J."/>
            <person name="Mooney P."/>
            <person name="Moule S."/>
            <person name="Mungall K.L."/>
            <person name="Murphy L.D."/>
            <person name="Niblett D."/>
            <person name="Odell C."/>
            <person name="Oliver K."/>
            <person name="O'Neil S."/>
            <person name="Pearson D."/>
            <person name="Quail M.A."/>
            <person name="Rabbinowitsch E."/>
            <person name="Rutherford K.M."/>
            <person name="Rutter S."/>
            <person name="Saunders D."/>
            <person name="Seeger K."/>
            <person name="Sharp S."/>
            <person name="Skelton J."/>
            <person name="Simmonds M.N."/>
            <person name="Squares R."/>
            <person name="Squares S."/>
            <person name="Stevens K."/>
            <person name="Taylor K."/>
            <person name="Taylor R.G."/>
            <person name="Tivey A."/>
            <person name="Walsh S.V."/>
            <person name="Warren T."/>
            <person name="Whitehead S."/>
            <person name="Woodward J.R."/>
            <person name="Volckaert G."/>
            <person name="Aert R."/>
            <person name="Robben J."/>
            <person name="Grymonprez B."/>
            <person name="Weltjens I."/>
            <person name="Vanstreels E."/>
            <person name="Rieger M."/>
            <person name="Schaefer M."/>
            <person name="Mueller-Auer S."/>
            <person name="Gabel C."/>
            <person name="Fuchs M."/>
            <person name="Duesterhoeft A."/>
            <person name="Fritzc C."/>
            <person name="Holzer E."/>
            <person name="Moestl D."/>
            <person name="Hilbert H."/>
            <person name="Borzym K."/>
            <person name="Langer I."/>
            <person name="Beck A."/>
            <person name="Lehrach H."/>
            <person name="Reinhardt R."/>
            <person name="Pohl T.M."/>
            <person name="Eger P."/>
            <person name="Zimmermann W."/>
            <person name="Wedler H."/>
            <person name="Wambutt R."/>
            <person name="Purnelle B."/>
            <person name="Goffeau A."/>
            <person name="Cadieu E."/>
            <person name="Dreano S."/>
            <person name="Gloux S."/>
            <person name="Lelaure V."/>
            <person name="Mottier S."/>
            <person name="Galibert F."/>
            <person name="Aves S.J."/>
            <person name="Xiang Z."/>
            <person name="Hunt C."/>
            <person name="Moore K."/>
            <person name="Hurst S.M."/>
            <person name="Lucas M."/>
            <person name="Rochet M."/>
            <person name="Gaillardin C."/>
            <person name="Tallada V.A."/>
            <person name="Garzon A."/>
            <person name="Thode G."/>
            <person name="Daga R.R."/>
            <person name="Cruzado L."/>
            <person name="Jimenez J."/>
            <person name="Sanchez M."/>
            <person name="del Rey F."/>
            <person name="Benito J."/>
            <person name="Dominguez A."/>
            <person name="Revuelta J.L."/>
            <person name="Moreno S."/>
            <person name="Armstrong J."/>
            <person name="Forsburg S.L."/>
            <person name="Cerutti L."/>
            <person name="Lowe T."/>
            <person name="McCombie W.R."/>
            <person name="Paulsen I."/>
            <person name="Potashkin J."/>
            <person name="Shpakovski G.V."/>
            <person name="Ussery D."/>
            <person name="Barrell B.G."/>
            <person name="Nurse P."/>
        </authorList>
    </citation>
    <scope>NUCLEOTIDE SEQUENCE [LARGE SCALE GENOMIC DNA]</scope>
    <source>
        <strain>972 / ATCC 24843</strain>
    </source>
</reference>
<reference key="2">
    <citation type="journal article" date="2008" name="J. Proteome Res.">
        <title>Phosphoproteome analysis of fission yeast.</title>
        <authorList>
            <person name="Wilson-Grady J.T."/>
            <person name="Villen J."/>
            <person name="Gygi S.P."/>
        </authorList>
    </citation>
    <scope>PHOSPHORYLATION [LARGE SCALE ANALYSIS] AT SER-67 AND SER-96</scope>
    <scope>IDENTIFICATION BY MASS SPECTROMETRY</scope>
</reference>